<reference key="1">
    <citation type="submission" date="2008-10" db="EMBL/GenBank/DDBJ databases">
        <title>Genome sequence of Bacillus cereus B4264.</title>
        <authorList>
            <person name="Dodson R.J."/>
            <person name="Durkin A.S."/>
            <person name="Rosovitz M.J."/>
            <person name="Rasko D.A."/>
            <person name="Hoffmaster A."/>
            <person name="Ravel J."/>
            <person name="Sutton G."/>
        </authorList>
    </citation>
    <scope>NUCLEOTIDE SEQUENCE [LARGE SCALE GENOMIC DNA]</scope>
    <source>
        <strain>B4264</strain>
    </source>
</reference>
<protein>
    <recommendedName>
        <fullName evidence="1">Segregation and condensation protein A</fullName>
    </recommendedName>
</protein>
<gene>
    <name evidence="1" type="primary">scpA</name>
    <name type="ordered locus">BCB4264_A4167</name>
</gene>
<organism>
    <name type="scientific">Bacillus cereus (strain B4264)</name>
    <dbReference type="NCBI Taxonomy" id="405532"/>
    <lineage>
        <taxon>Bacteria</taxon>
        <taxon>Bacillati</taxon>
        <taxon>Bacillota</taxon>
        <taxon>Bacilli</taxon>
        <taxon>Bacillales</taxon>
        <taxon>Bacillaceae</taxon>
        <taxon>Bacillus</taxon>
        <taxon>Bacillus cereus group</taxon>
    </lineage>
</organism>
<keyword id="KW-0131">Cell cycle</keyword>
<keyword id="KW-0132">Cell division</keyword>
<keyword id="KW-0159">Chromosome partition</keyword>
<keyword id="KW-0963">Cytoplasm</keyword>
<evidence type="ECO:0000255" key="1">
    <source>
        <dbReference type="HAMAP-Rule" id="MF_01805"/>
    </source>
</evidence>
<accession>B7H949</accession>
<name>SCPA_BACC4</name>
<feature type="chain" id="PRO_1000187553" description="Segregation and condensation protein A">
    <location>
        <begin position="1"/>
        <end position="247"/>
    </location>
</feature>
<dbReference type="EMBL" id="CP001176">
    <property type="protein sequence ID" value="ACK60356.1"/>
    <property type="molecule type" value="Genomic_DNA"/>
</dbReference>
<dbReference type="RefSeq" id="WP_001199753.1">
    <property type="nucleotide sequence ID" value="NZ_VEHB01000002.1"/>
</dbReference>
<dbReference type="SMR" id="B7H949"/>
<dbReference type="KEGG" id="bcb:BCB4264_A4167"/>
<dbReference type="HOGENOM" id="CLU_038686_3_1_9"/>
<dbReference type="Proteomes" id="UP000007096">
    <property type="component" value="Chromosome"/>
</dbReference>
<dbReference type="GO" id="GO:0005737">
    <property type="term" value="C:cytoplasm"/>
    <property type="evidence" value="ECO:0007669"/>
    <property type="project" value="UniProtKB-SubCell"/>
</dbReference>
<dbReference type="GO" id="GO:0051301">
    <property type="term" value="P:cell division"/>
    <property type="evidence" value="ECO:0007669"/>
    <property type="project" value="UniProtKB-KW"/>
</dbReference>
<dbReference type="GO" id="GO:0007059">
    <property type="term" value="P:chromosome segregation"/>
    <property type="evidence" value="ECO:0007669"/>
    <property type="project" value="UniProtKB-UniRule"/>
</dbReference>
<dbReference type="GO" id="GO:0006260">
    <property type="term" value="P:DNA replication"/>
    <property type="evidence" value="ECO:0007669"/>
    <property type="project" value="UniProtKB-UniRule"/>
</dbReference>
<dbReference type="Gene3D" id="6.10.250.2410">
    <property type="match status" value="1"/>
</dbReference>
<dbReference type="Gene3D" id="1.10.10.580">
    <property type="entry name" value="Structural maintenance of chromosome 1. Chain E"/>
    <property type="match status" value="1"/>
</dbReference>
<dbReference type="HAMAP" id="MF_01805">
    <property type="entry name" value="ScpA"/>
    <property type="match status" value="1"/>
</dbReference>
<dbReference type="InterPro" id="IPR003768">
    <property type="entry name" value="ScpA"/>
</dbReference>
<dbReference type="InterPro" id="IPR023093">
    <property type="entry name" value="ScpA-like_C"/>
</dbReference>
<dbReference type="NCBIfam" id="NF000992">
    <property type="entry name" value="PRK00104.1-1"/>
    <property type="match status" value="1"/>
</dbReference>
<dbReference type="NCBIfam" id="NF000995">
    <property type="entry name" value="PRK00104.1-4"/>
    <property type="match status" value="1"/>
</dbReference>
<dbReference type="PANTHER" id="PTHR33969">
    <property type="entry name" value="SEGREGATION AND CONDENSATION PROTEIN A"/>
    <property type="match status" value="1"/>
</dbReference>
<dbReference type="PANTHER" id="PTHR33969:SF2">
    <property type="entry name" value="SEGREGATION AND CONDENSATION PROTEIN A"/>
    <property type="match status" value="1"/>
</dbReference>
<dbReference type="Pfam" id="PF02616">
    <property type="entry name" value="SMC_ScpA"/>
    <property type="match status" value="1"/>
</dbReference>
<sequence>MQYNFKVEAFEGPLDLLLHLIHRYEIDIYNIPVADITEQYLSYVHTMKELQLDVASEYLVMAATLLQIKSKMLLPKHEEDVLDNGDDFIDDPRQELMERLIEYKKYKQVATELKEREQERAQLYTRPPIDFTSLQQEEETSLPLDVTLYDMLAAFQKLMRRKKAKKPVTTRITRQEIPIEQRMTDILKQLKIKGGRQSFYDLFVDDEREIMVVTFLAVLELMKNQQIIIEQEHNFDEIFVSSSNKSA</sequence>
<proteinExistence type="inferred from homology"/>
<comment type="function">
    <text evidence="1">Participates in chromosomal partition during cell division. May act via the formation of a condensin-like complex containing Smc and ScpB that pull DNA away from mid-cell into both cell halves.</text>
</comment>
<comment type="subunit">
    <text evidence="1">Component of a cohesin-like complex composed of ScpA, ScpB and the Smc homodimer, in which ScpA and ScpB bind to the head domain of Smc. The presence of the three proteins is required for the association of the complex with DNA.</text>
</comment>
<comment type="subcellular location">
    <subcellularLocation>
        <location evidence="1">Cytoplasm</location>
    </subcellularLocation>
    <text evidence="1">Associated with two foci at the outer edges of the nucleoid region in young cells, and at four foci within both cell halves in older cells.</text>
</comment>
<comment type="similarity">
    <text evidence="1">Belongs to the ScpA family.</text>
</comment>